<gene>
    <name evidence="1" type="primary">purT</name>
    <name type="ordered locus">PC1_1834</name>
</gene>
<proteinExistence type="inferred from homology"/>
<protein>
    <recommendedName>
        <fullName evidence="1">Formate-dependent phosphoribosylglycinamide formyltransferase</fullName>
        <ecNumber evidence="1">6.3.1.21</ecNumber>
    </recommendedName>
    <alternativeName>
        <fullName evidence="1">5'-phosphoribosylglycinamide transformylase 2</fullName>
    </alternativeName>
    <alternativeName>
        <fullName evidence="1">Formate-dependent GAR transformylase</fullName>
    </alternativeName>
    <alternativeName>
        <fullName evidence="1">GAR transformylase 2</fullName>
        <shortName evidence="1">GART 2</shortName>
    </alternativeName>
    <alternativeName>
        <fullName evidence="1">Non-folate glycinamide ribonucleotide transformylase</fullName>
    </alternativeName>
    <alternativeName>
        <fullName evidence="1">Phosphoribosylglycinamide formyltransferase 2</fullName>
    </alternativeName>
</protein>
<dbReference type="EC" id="6.3.1.21" evidence="1"/>
<dbReference type="EMBL" id="CP001657">
    <property type="protein sequence ID" value="ACT12875.1"/>
    <property type="molecule type" value="Genomic_DNA"/>
</dbReference>
<dbReference type="RefSeq" id="WP_015840078.1">
    <property type="nucleotide sequence ID" value="NC_012917.1"/>
</dbReference>
<dbReference type="SMR" id="C6DFT2"/>
<dbReference type="STRING" id="561230.PC1_1834"/>
<dbReference type="KEGG" id="pct:PC1_1834"/>
<dbReference type="eggNOG" id="COG0027">
    <property type="taxonomic scope" value="Bacteria"/>
</dbReference>
<dbReference type="HOGENOM" id="CLU_011534_1_3_6"/>
<dbReference type="OrthoDB" id="9804625at2"/>
<dbReference type="UniPathway" id="UPA00074">
    <property type="reaction ID" value="UER00127"/>
</dbReference>
<dbReference type="Proteomes" id="UP000002736">
    <property type="component" value="Chromosome"/>
</dbReference>
<dbReference type="GO" id="GO:0005829">
    <property type="term" value="C:cytosol"/>
    <property type="evidence" value="ECO:0007669"/>
    <property type="project" value="TreeGrafter"/>
</dbReference>
<dbReference type="GO" id="GO:0005524">
    <property type="term" value="F:ATP binding"/>
    <property type="evidence" value="ECO:0007669"/>
    <property type="project" value="UniProtKB-UniRule"/>
</dbReference>
<dbReference type="GO" id="GO:0000287">
    <property type="term" value="F:magnesium ion binding"/>
    <property type="evidence" value="ECO:0007669"/>
    <property type="project" value="InterPro"/>
</dbReference>
<dbReference type="GO" id="GO:0043815">
    <property type="term" value="F:phosphoribosylglycinamide formyltransferase 2 activity"/>
    <property type="evidence" value="ECO:0007669"/>
    <property type="project" value="UniProtKB-UniRule"/>
</dbReference>
<dbReference type="GO" id="GO:0004644">
    <property type="term" value="F:phosphoribosylglycinamide formyltransferase activity"/>
    <property type="evidence" value="ECO:0007669"/>
    <property type="project" value="InterPro"/>
</dbReference>
<dbReference type="GO" id="GO:0006189">
    <property type="term" value="P:'de novo' IMP biosynthetic process"/>
    <property type="evidence" value="ECO:0007669"/>
    <property type="project" value="UniProtKB-UniRule"/>
</dbReference>
<dbReference type="FunFam" id="3.30.1490.20:FF:000013">
    <property type="entry name" value="Formate-dependent phosphoribosylglycinamide formyltransferase"/>
    <property type="match status" value="1"/>
</dbReference>
<dbReference type="FunFam" id="3.30.470.20:FF:000027">
    <property type="entry name" value="Formate-dependent phosphoribosylglycinamide formyltransferase"/>
    <property type="match status" value="1"/>
</dbReference>
<dbReference type="FunFam" id="3.40.50.20:FF:000007">
    <property type="entry name" value="Formate-dependent phosphoribosylglycinamide formyltransferase"/>
    <property type="match status" value="1"/>
</dbReference>
<dbReference type="Gene3D" id="3.40.50.20">
    <property type="match status" value="1"/>
</dbReference>
<dbReference type="Gene3D" id="3.30.1490.20">
    <property type="entry name" value="ATP-grasp fold, A domain"/>
    <property type="match status" value="1"/>
</dbReference>
<dbReference type="Gene3D" id="3.30.470.20">
    <property type="entry name" value="ATP-grasp fold, B domain"/>
    <property type="match status" value="1"/>
</dbReference>
<dbReference type="HAMAP" id="MF_01643">
    <property type="entry name" value="PurT"/>
    <property type="match status" value="1"/>
</dbReference>
<dbReference type="InterPro" id="IPR011761">
    <property type="entry name" value="ATP-grasp"/>
</dbReference>
<dbReference type="InterPro" id="IPR003135">
    <property type="entry name" value="ATP-grasp_carboxylate-amine"/>
</dbReference>
<dbReference type="InterPro" id="IPR013815">
    <property type="entry name" value="ATP_grasp_subdomain_1"/>
</dbReference>
<dbReference type="InterPro" id="IPR016185">
    <property type="entry name" value="PreATP-grasp_dom_sf"/>
</dbReference>
<dbReference type="InterPro" id="IPR005862">
    <property type="entry name" value="PurT"/>
</dbReference>
<dbReference type="InterPro" id="IPR054350">
    <property type="entry name" value="PurT/PurK_preATP-grasp"/>
</dbReference>
<dbReference type="InterPro" id="IPR048740">
    <property type="entry name" value="PurT_C"/>
</dbReference>
<dbReference type="InterPro" id="IPR011054">
    <property type="entry name" value="Rudment_hybrid_motif"/>
</dbReference>
<dbReference type="NCBIfam" id="NF006766">
    <property type="entry name" value="PRK09288.1"/>
    <property type="match status" value="1"/>
</dbReference>
<dbReference type="NCBIfam" id="TIGR01142">
    <property type="entry name" value="purT"/>
    <property type="match status" value="1"/>
</dbReference>
<dbReference type="PANTHER" id="PTHR43055">
    <property type="entry name" value="FORMATE-DEPENDENT PHOSPHORIBOSYLGLYCINAMIDE FORMYLTRANSFERASE"/>
    <property type="match status" value="1"/>
</dbReference>
<dbReference type="PANTHER" id="PTHR43055:SF1">
    <property type="entry name" value="FORMATE-DEPENDENT PHOSPHORIBOSYLGLYCINAMIDE FORMYLTRANSFERASE"/>
    <property type="match status" value="1"/>
</dbReference>
<dbReference type="Pfam" id="PF02222">
    <property type="entry name" value="ATP-grasp"/>
    <property type="match status" value="1"/>
</dbReference>
<dbReference type="Pfam" id="PF21244">
    <property type="entry name" value="PurT_C"/>
    <property type="match status" value="1"/>
</dbReference>
<dbReference type="Pfam" id="PF22660">
    <property type="entry name" value="RS_preATP-grasp-like"/>
    <property type="match status" value="1"/>
</dbReference>
<dbReference type="SUPFAM" id="SSF56059">
    <property type="entry name" value="Glutathione synthetase ATP-binding domain-like"/>
    <property type="match status" value="1"/>
</dbReference>
<dbReference type="SUPFAM" id="SSF52440">
    <property type="entry name" value="PreATP-grasp domain"/>
    <property type="match status" value="1"/>
</dbReference>
<dbReference type="SUPFAM" id="SSF51246">
    <property type="entry name" value="Rudiment single hybrid motif"/>
    <property type="match status" value="1"/>
</dbReference>
<dbReference type="PROSITE" id="PS50975">
    <property type="entry name" value="ATP_GRASP"/>
    <property type="match status" value="1"/>
</dbReference>
<evidence type="ECO:0000255" key="1">
    <source>
        <dbReference type="HAMAP-Rule" id="MF_01643"/>
    </source>
</evidence>
<reference key="1">
    <citation type="submission" date="2009-07" db="EMBL/GenBank/DDBJ databases">
        <title>Complete sequence of Pectobacterium carotovorum subsp. carotovorum PC1.</title>
        <authorList>
            <consortium name="US DOE Joint Genome Institute"/>
            <person name="Lucas S."/>
            <person name="Copeland A."/>
            <person name="Lapidus A."/>
            <person name="Glavina del Rio T."/>
            <person name="Tice H."/>
            <person name="Bruce D."/>
            <person name="Goodwin L."/>
            <person name="Pitluck S."/>
            <person name="Munk A.C."/>
            <person name="Brettin T."/>
            <person name="Detter J.C."/>
            <person name="Han C."/>
            <person name="Tapia R."/>
            <person name="Larimer F."/>
            <person name="Land M."/>
            <person name="Hauser L."/>
            <person name="Kyrpides N."/>
            <person name="Mikhailova N."/>
            <person name="Balakrishnan V."/>
            <person name="Glasner J."/>
            <person name="Perna N.T."/>
        </authorList>
    </citation>
    <scope>NUCLEOTIDE SEQUENCE [LARGE SCALE GENOMIC DNA]</scope>
    <source>
        <strain>PC1</strain>
    </source>
</reference>
<keyword id="KW-0067">ATP-binding</keyword>
<keyword id="KW-0436">Ligase</keyword>
<keyword id="KW-0460">Magnesium</keyword>
<keyword id="KW-0479">Metal-binding</keyword>
<keyword id="KW-0547">Nucleotide-binding</keyword>
<keyword id="KW-0658">Purine biosynthesis</keyword>
<feature type="chain" id="PRO_1000215838" description="Formate-dependent phosphoribosylglycinamide formyltransferase">
    <location>
        <begin position="1"/>
        <end position="392"/>
    </location>
</feature>
<feature type="domain" description="ATP-grasp" evidence="1">
    <location>
        <begin position="119"/>
        <end position="308"/>
    </location>
</feature>
<feature type="binding site" evidence="1">
    <location>
        <begin position="22"/>
        <end position="23"/>
    </location>
    <ligand>
        <name>N(1)-(5-phospho-beta-D-ribosyl)glycinamide</name>
        <dbReference type="ChEBI" id="CHEBI:143788"/>
    </ligand>
</feature>
<feature type="binding site" evidence="1">
    <location>
        <position position="82"/>
    </location>
    <ligand>
        <name>N(1)-(5-phospho-beta-D-ribosyl)glycinamide</name>
        <dbReference type="ChEBI" id="CHEBI:143788"/>
    </ligand>
</feature>
<feature type="binding site" evidence="1">
    <location>
        <position position="114"/>
    </location>
    <ligand>
        <name>ATP</name>
        <dbReference type="ChEBI" id="CHEBI:30616"/>
    </ligand>
</feature>
<feature type="binding site" evidence="1">
    <location>
        <position position="155"/>
    </location>
    <ligand>
        <name>ATP</name>
        <dbReference type="ChEBI" id="CHEBI:30616"/>
    </ligand>
</feature>
<feature type="binding site" evidence="1">
    <location>
        <begin position="160"/>
        <end position="165"/>
    </location>
    <ligand>
        <name>ATP</name>
        <dbReference type="ChEBI" id="CHEBI:30616"/>
    </ligand>
</feature>
<feature type="binding site" evidence="1">
    <location>
        <begin position="195"/>
        <end position="198"/>
    </location>
    <ligand>
        <name>ATP</name>
        <dbReference type="ChEBI" id="CHEBI:30616"/>
    </ligand>
</feature>
<feature type="binding site" evidence="1">
    <location>
        <position position="203"/>
    </location>
    <ligand>
        <name>ATP</name>
        <dbReference type="ChEBI" id="CHEBI:30616"/>
    </ligand>
</feature>
<feature type="binding site" evidence="1">
    <location>
        <position position="267"/>
    </location>
    <ligand>
        <name>Mg(2+)</name>
        <dbReference type="ChEBI" id="CHEBI:18420"/>
    </ligand>
</feature>
<feature type="binding site" evidence="1">
    <location>
        <position position="279"/>
    </location>
    <ligand>
        <name>Mg(2+)</name>
        <dbReference type="ChEBI" id="CHEBI:18420"/>
    </ligand>
</feature>
<feature type="binding site" evidence="1">
    <location>
        <position position="286"/>
    </location>
    <ligand>
        <name>N(1)-(5-phospho-beta-D-ribosyl)glycinamide</name>
        <dbReference type="ChEBI" id="CHEBI:143788"/>
    </ligand>
</feature>
<feature type="binding site" evidence="1">
    <location>
        <position position="355"/>
    </location>
    <ligand>
        <name>N(1)-(5-phospho-beta-D-ribosyl)glycinamide</name>
        <dbReference type="ChEBI" id="CHEBI:143788"/>
    </ligand>
</feature>
<feature type="binding site" evidence="1">
    <location>
        <begin position="362"/>
        <end position="363"/>
    </location>
    <ligand>
        <name>N(1)-(5-phospho-beta-D-ribosyl)glycinamide</name>
        <dbReference type="ChEBI" id="CHEBI:143788"/>
    </ligand>
</feature>
<accession>C6DFT2</accession>
<comment type="function">
    <text evidence="1">Involved in the de novo purine biosynthesis. Catalyzes the transfer of formate to 5-phospho-ribosyl-glycinamide (GAR), producing 5-phospho-ribosyl-N-formylglycinamide (FGAR). Formate is provided by PurU via hydrolysis of 10-formyl-tetrahydrofolate.</text>
</comment>
<comment type="catalytic activity">
    <reaction evidence="1">
        <text>N(1)-(5-phospho-beta-D-ribosyl)glycinamide + formate + ATP = N(2)-formyl-N(1)-(5-phospho-beta-D-ribosyl)glycinamide + ADP + phosphate + H(+)</text>
        <dbReference type="Rhea" id="RHEA:24829"/>
        <dbReference type="ChEBI" id="CHEBI:15378"/>
        <dbReference type="ChEBI" id="CHEBI:15740"/>
        <dbReference type="ChEBI" id="CHEBI:30616"/>
        <dbReference type="ChEBI" id="CHEBI:43474"/>
        <dbReference type="ChEBI" id="CHEBI:143788"/>
        <dbReference type="ChEBI" id="CHEBI:147286"/>
        <dbReference type="ChEBI" id="CHEBI:456216"/>
        <dbReference type="EC" id="6.3.1.21"/>
    </reaction>
    <physiologicalReaction direction="left-to-right" evidence="1">
        <dbReference type="Rhea" id="RHEA:24830"/>
    </physiologicalReaction>
</comment>
<comment type="pathway">
    <text evidence="1">Purine metabolism; IMP biosynthesis via de novo pathway; N(2)-formyl-N(1)-(5-phospho-D-ribosyl)glycinamide from N(1)-(5-phospho-D-ribosyl)glycinamide (formate route): step 1/1.</text>
</comment>
<comment type="subunit">
    <text evidence="1">Homodimer.</text>
</comment>
<comment type="similarity">
    <text evidence="1">Belongs to the PurK/PurT family.</text>
</comment>
<name>PURT_PECCP</name>
<sequence>MLTIGTALRADATRVMLLGSGELGKEVAIECQRLGIEVIAVDRYADAPAMQIAHRSHVINMLDGDALKALVEAERPDYIVPEIEAIATDMLVTLEKQGHHVVPCAEATRLTMNREGIRRLAAETLGVPTSTYRFADSEESFRQAVEAIGYPCIVKPVMSSSGKGQSLIRSAEQLDKAWNYAQQGGRAGGGRVIVEGLVNFDFEITLLTVHAVDGIHFCAPIGHRQEDGDYRESWQPQQMSALAQERAQKMASDVVKALGGYGLFGVELFVCGDEVIFSEVSPRPHDTGMVTMISQDLSEFALHVRAFLGLPIGAVRQYGASASAVILPELESNNVRYQGLESALLPHTQIRLFGKPDIGGKRRMGVALASAETTEDAVEIAKRVAAGVTVSG</sequence>
<organism>
    <name type="scientific">Pectobacterium carotovorum subsp. carotovorum (strain PC1)</name>
    <dbReference type="NCBI Taxonomy" id="561230"/>
    <lineage>
        <taxon>Bacteria</taxon>
        <taxon>Pseudomonadati</taxon>
        <taxon>Pseudomonadota</taxon>
        <taxon>Gammaproteobacteria</taxon>
        <taxon>Enterobacterales</taxon>
        <taxon>Pectobacteriaceae</taxon>
        <taxon>Pectobacterium</taxon>
    </lineage>
</organism>